<evidence type="ECO:0000255" key="1">
    <source>
        <dbReference type="HAMAP-Rule" id="MF_01345"/>
    </source>
</evidence>
<evidence type="ECO:0000305" key="2"/>
<accession>A6Q1I7</accession>
<sequence>MAYKRVIQGKVVKKSGDKTVSLLVERKVVHPKYHKIVKRFKKYLVHDEHNKAKVGDIVTAVECRPISKRKSFRLKEIVQAGVE</sequence>
<reference key="1">
    <citation type="journal article" date="2007" name="Proc. Natl. Acad. Sci. U.S.A.">
        <title>Deep-sea vent epsilon-proteobacterial genomes provide insights into emergence of pathogens.</title>
        <authorList>
            <person name="Nakagawa S."/>
            <person name="Takaki Y."/>
            <person name="Shimamura S."/>
            <person name="Reysenbach A.-L."/>
            <person name="Takai K."/>
            <person name="Horikoshi K."/>
        </authorList>
    </citation>
    <scope>NUCLEOTIDE SEQUENCE [LARGE SCALE GENOMIC DNA]</scope>
    <source>
        <strain>SB155-2</strain>
    </source>
</reference>
<gene>
    <name evidence="1" type="primary">rpsQ</name>
    <name type="ordered locus">NIS_0232</name>
</gene>
<protein>
    <recommendedName>
        <fullName evidence="1">Small ribosomal subunit protein uS17</fullName>
    </recommendedName>
    <alternativeName>
        <fullName evidence="2">30S ribosomal protein S17</fullName>
    </alternativeName>
</protein>
<feature type="chain" id="PRO_1000054984" description="Small ribosomal subunit protein uS17">
    <location>
        <begin position="1"/>
        <end position="83"/>
    </location>
</feature>
<dbReference type="EMBL" id="AP009178">
    <property type="protein sequence ID" value="BAF69346.1"/>
    <property type="molecule type" value="Genomic_DNA"/>
</dbReference>
<dbReference type="RefSeq" id="WP_012081609.1">
    <property type="nucleotide sequence ID" value="NC_009662.1"/>
</dbReference>
<dbReference type="SMR" id="A6Q1I7"/>
<dbReference type="FunCoup" id="A6Q1I7">
    <property type="interactions" value="373"/>
</dbReference>
<dbReference type="STRING" id="387092.NIS_0232"/>
<dbReference type="KEGG" id="nis:NIS_0232"/>
<dbReference type="eggNOG" id="COG0186">
    <property type="taxonomic scope" value="Bacteria"/>
</dbReference>
<dbReference type="HOGENOM" id="CLU_073626_1_1_7"/>
<dbReference type="InParanoid" id="A6Q1I7"/>
<dbReference type="OrthoDB" id="9811714at2"/>
<dbReference type="Proteomes" id="UP000001118">
    <property type="component" value="Chromosome"/>
</dbReference>
<dbReference type="GO" id="GO:0022627">
    <property type="term" value="C:cytosolic small ribosomal subunit"/>
    <property type="evidence" value="ECO:0007669"/>
    <property type="project" value="TreeGrafter"/>
</dbReference>
<dbReference type="GO" id="GO:0019843">
    <property type="term" value="F:rRNA binding"/>
    <property type="evidence" value="ECO:0007669"/>
    <property type="project" value="UniProtKB-UniRule"/>
</dbReference>
<dbReference type="GO" id="GO:0003735">
    <property type="term" value="F:structural constituent of ribosome"/>
    <property type="evidence" value="ECO:0007669"/>
    <property type="project" value="InterPro"/>
</dbReference>
<dbReference type="GO" id="GO:0006412">
    <property type="term" value="P:translation"/>
    <property type="evidence" value="ECO:0007669"/>
    <property type="project" value="UniProtKB-UniRule"/>
</dbReference>
<dbReference type="CDD" id="cd00364">
    <property type="entry name" value="Ribosomal_uS17"/>
    <property type="match status" value="1"/>
</dbReference>
<dbReference type="Gene3D" id="2.40.50.140">
    <property type="entry name" value="Nucleic acid-binding proteins"/>
    <property type="match status" value="1"/>
</dbReference>
<dbReference type="HAMAP" id="MF_01345_B">
    <property type="entry name" value="Ribosomal_uS17_B"/>
    <property type="match status" value="1"/>
</dbReference>
<dbReference type="InterPro" id="IPR012340">
    <property type="entry name" value="NA-bd_OB-fold"/>
</dbReference>
<dbReference type="InterPro" id="IPR000266">
    <property type="entry name" value="Ribosomal_uS17"/>
</dbReference>
<dbReference type="InterPro" id="IPR019984">
    <property type="entry name" value="Ribosomal_uS17_bact/chlr"/>
</dbReference>
<dbReference type="InterPro" id="IPR019979">
    <property type="entry name" value="Ribosomal_uS17_CS"/>
</dbReference>
<dbReference type="NCBIfam" id="NF004123">
    <property type="entry name" value="PRK05610.1"/>
    <property type="match status" value="1"/>
</dbReference>
<dbReference type="NCBIfam" id="TIGR03635">
    <property type="entry name" value="uS17_bact"/>
    <property type="match status" value="1"/>
</dbReference>
<dbReference type="PANTHER" id="PTHR10744">
    <property type="entry name" value="40S RIBOSOMAL PROTEIN S11 FAMILY MEMBER"/>
    <property type="match status" value="1"/>
</dbReference>
<dbReference type="PANTHER" id="PTHR10744:SF1">
    <property type="entry name" value="SMALL RIBOSOMAL SUBUNIT PROTEIN US17M"/>
    <property type="match status" value="1"/>
</dbReference>
<dbReference type="Pfam" id="PF00366">
    <property type="entry name" value="Ribosomal_S17"/>
    <property type="match status" value="1"/>
</dbReference>
<dbReference type="PRINTS" id="PR00973">
    <property type="entry name" value="RIBOSOMALS17"/>
</dbReference>
<dbReference type="SUPFAM" id="SSF50249">
    <property type="entry name" value="Nucleic acid-binding proteins"/>
    <property type="match status" value="1"/>
</dbReference>
<dbReference type="PROSITE" id="PS00056">
    <property type="entry name" value="RIBOSOMAL_S17"/>
    <property type="match status" value="1"/>
</dbReference>
<keyword id="KW-1185">Reference proteome</keyword>
<keyword id="KW-0687">Ribonucleoprotein</keyword>
<keyword id="KW-0689">Ribosomal protein</keyword>
<keyword id="KW-0694">RNA-binding</keyword>
<keyword id="KW-0699">rRNA-binding</keyword>
<comment type="function">
    <text evidence="1">One of the primary rRNA binding proteins, it binds specifically to the 5'-end of 16S ribosomal RNA.</text>
</comment>
<comment type="subunit">
    <text evidence="1">Part of the 30S ribosomal subunit.</text>
</comment>
<comment type="similarity">
    <text evidence="1">Belongs to the universal ribosomal protein uS17 family.</text>
</comment>
<organism>
    <name type="scientific">Nitratiruptor sp. (strain SB155-2)</name>
    <dbReference type="NCBI Taxonomy" id="387092"/>
    <lineage>
        <taxon>Bacteria</taxon>
        <taxon>Pseudomonadati</taxon>
        <taxon>Campylobacterota</taxon>
        <taxon>Epsilonproteobacteria</taxon>
        <taxon>Nautiliales</taxon>
        <taxon>Nitratiruptoraceae</taxon>
        <taxon>Nitratiruptor</taxon>
    </lineage>
</organism>
<name>RS17_NITSB</name>
<proteinExistence type="inferred from homology"/>